<accession>Q1IWN1</accession>
<organism>
    <name type="scientific">Deinococcus geothermalis (strain DSM 11300 / CIP 105573 / AG-3a)</name>
    <dbReference type="NCBI Taxonomy" id="319795"/>
    <lineage>
        <taxon>Bacteria</taxon>
        <taxon>Thermotogati</taxon>
        <taxon>Deinococcota</taxon>
        <taxon>Deinococci</taxon>
        <taxon>Deinococcales</taxon>
        <taxon>Deinococcaceae</taxon>
        <taxon>Deinococcus</taxon>
    </lineage>
</organism>
<comment type="function">
    <text evidence="1">Excises uracil residues from the DNA which can arise as a result of misincorporation of dUMP residues by DNA polymerase or due to deamination of cytosine.</text>
</comment>
<comment type="catalytic activity">
    <reaction evidence="1">
        <text>Hydrolyzes single-stranded DNA or mismatched double-stranded DNA and polynucleotides, releasing free uracil.</text>
        <dbReference type="EC" id="3.2.2.27"/>
    </reaction>
</comment>
<comment type="subcellular location">
    <subcellularLocation>
        <location evidence="1">Cytoplasm</location>
    </subcellularLocation>
</comment>
<comment type="similarity">
    <text evidence="1">Belongs to the uracil-DNA glycosylase (UDG) superfamily. UNG family.</text>
</comment>
<name>UNG_DEIGD</name>
<reference key="1">
    <citation type="submission" date="2006-04" db="EMBL/GenBank/DDBJ databases">
        <title>Complete sequence of chromosome of Deinococcus geothermalis DSM 11300.</title>
        <authorList>
            <person name="Copeland A."/>
            <person name="Lucas S."/>
            <person name="Lapidus A."/>
            <person name="Barry K."/>
            <person name="Detter J.C."/>
            <person name="Glavina del Rio T."/>
            <person name="Hammon N."/>
            <person name="Israni S."/>
            <person name="Dalin E."/>
            <person name="Tice H."/>
            <person name="Pitluck S."/>
            <person name="Brettin T."/>
            <person name="Bruce D."/>
            <person name="Han C."/>
            <person name="Tapia R."/>
            <person name="Saunders E."/>
            <person name="Gilna P."/>
            <person name="Schmutz J."/>
            <person name="Larimer F."/>
            <person name="Land M."/>
            <person name="Hauser L."/>
            <person name="Kyrpides N."/>
            <person name="Kim E."/>
            <person name="Daly M.J."/>
            <person name="Fredrickson J.K."/>
            <person name="Makarova K.S."/>
            <person name="Gaidamakova E.K."/>
            <person name="Zhai M."/>
            <person name="Richardson P."/>
        </authorList>
    </citation>
    <scope>NUCLEOTIDE SEQUENCE [LARGE SCALE GENOMIC DNA]</scope>
    <source>
        <strain>DSM 11300 / CIP 105573 / AG-3a</strain>
    </source>
</reference>
<keyword id="KW-0963">Cytoplasm</keyword>
<keyword id="KW-0227">DNA damage</keyword>
<keyword id="KW-0234">DNA repair</keyword>
<keyword id="KW-0378">Hydrolase</keyword>
<protein>
    <recommendedName>
        <fullName evidence="1">Uracil-DNA glycosylase</fullName>
        <shortName evidence="1">UDG</shortName>
        <ecNumber evidence="1">3.2.2.27</ecNumber>
    </recommendedName>
</protein>
<proteinExistence type="inferred from homology"/>
<sequence length="245" mass="27000">MSDPASLFGLPPDPDAAPPVHLPGDWDEVLRGETSQPYFRELWAFVQREREAGPVYPAPEDLFSALRLTPYRDVKVLILGQDPYHGAGQAHGLSFSVRPGVRVPPSLQNIYKELRDDVGFKPPRHGSLVSWARQGVLLLNAVLTVREGEPNSHAGKGWESFTDAIIRAVNEKPTRVVFVLWGAYARKKAKLVTQPQHVIIESAHPSPLSVAKFLGTRPFSRINAALEAAGETPIDWQLPAEPEVA</sequence>
<feature type="chain" id="PRO_1000199775" description="Uracil-DNA glycosylase">
    <location>
        <begin position="1"/>
        <end position="245"/>
    </location>
</feature>
<feature type="active site" description="Proton acceptor" evidence="1">
    <location>
        <position position="82"/>
    </location>
</feature>
<gene>
    <name evidence="1" type="primary">ung</name>
    <name type="ordered locus">Dgeo_2059</name>
</gene>
<evidence type="ECO:0000255" key="1">
    <source>
        <dbReference type="HAMAP-Rule" id="MF_00148"/>
    </source>
</evidence>
<dbReference type="EC" id="3.2.2.27" evidence="1"/>
<dbReference type="EMBL" id="CP000359">
    <property type="protein sequence ID" value="ABF46353.1"/>
    <property type="molecule type" value="Genomic_DNA"/>
</dbReference>
<dbReference type="RefSeq" id="WP_011531179.1">
    <property type="nucleotide sequence ID" value="NC_008025.1"/>
</dbReference>
<dbReference type="SMR" id="Q1IWN1"/>
<dbReference type="STRING" id="319795.Dgeo_2059"/>
<dbReference type="KEGG" id="dge:Dgeo_2059"/>
<dbReference type="eggNOG" id="COG0692">
    <property type="taxonomic scope" value="Bacteria"/>
</dbReference>
<dbReference type="HOGENOM" id="CLU_032162_3_0_0"/>
<dbReference type="Proteomes" id="UP000002431">
    <property type="component" value="Chromosome"/>
</dbReference>
<dbReference type="GO" id="GO:0005737">
    <property type="term" value="C:cytoplasm"/>
    <property type="evidence" value="ECO:0007669"/>
    <property type="project" value="UniProtKB-SubCell"/>
</dbReference>
<dbReference type="GO" id="GO:0004844">
    <property type="term" value="F:uracil DNA N-glycosylase activity"/>
    <property type="evidence" value="ECO:0007669"/>
    <property type="project" value="UniProtKB-UniRule"/>
</dbReference>
<dbReference type="GO" id="GO:0097510">
    <property type="term" value="P:base-excision repair, AP site formation via deaminated base removal"/>
    <property type="evidence" value="ECO:0007669"/>
    <property type="project" value="TreeGrafter"/>
</dbReference>
<dbReference type="CDD" id="cd10027">
    <property type="entry name" value="UDG-F1-like"/>
    <property type="match status" value="1"/>
</dbReference>
<dbReference type="FunFam" id="3.40.470.10:FF:000001">
    <property type="entry name" value="Uracil-DNA glycosylase"/>
    <property type="match status" value="1"/>
</dbReference>
<dbReference type="Gene3D" id="3.40.470.10">
    <property type="entry name" value="Uracil-DNA glycosylase-like domain"/>
    <property type="match status" value="1"/>
</dbReference>
<dbReference type="HAMAP" id="MF_00148">
    <property type="entry name" value="UDG"/>
    <property type="match status" value="1"/>
</dbReference>
<dbReference type="InterPro" id="IPR002043">
    <property type="entry name" value="UDG_fam1"/>
</dbReference>
<dbReference type="InterPro" id="IPR018085">
    <property type="entry name" value="Ura-DNA_Glyclase_AS"/>
</dbReference>
<dbReference type="InterPro" id="IPR005122">
    <property type="entry name" value="Uracil-DNA_glycosylase-like"/>
</dbReference>
<dbReference type="InterPro" id="IPR036895">
    <property type="entry name" value="Uracil-DNA_glycosylase-like_sf"/>
</dbReference>
<dbReference type="NCBIfam" id="NF003588">
    <property type="entry name" value="PRK05254.1-1"/>
    <property type="match status" value="1"/>
</dbReference>
<dbReference type="NCBIfam" id="NF003589">
    <property type="entry name" value="PRK05254.1-2"/>
    <property type="match status" value="1"/>
</dbReference>
<dbReference type="NCBIfam" id="NF003591">
    <property type="entry name" value="PRK05254.1-4"/>
    <property type="match status" value="1"/>
</dbReference>
<dbReference type="NCBIfam" id="NF003592">
    <property type="entry name" value="PRK05254.1-5"/>
    <property type="match status" value="1"/>
</dbReference>
<dbReference type="NCBIfam" id="TIGR00628">
    <property type="entry name" value="ung"/>
    <property type="match status" value="1"/>
</dbReference>
<dbReference type="PANTHER" id="PTHR11264">
    <property type="entry name" value="URACIL-DNA GLYCOSYLASE"/>
    <property type="match status" value="1"/>
</dbReference>
<dbReference type="PANTHER" id="PTHR11264:SF0">
    <property type="entry name" value="URACIL-DNA GLYCOSYLASE"/>
    <property type="match status" value="1"/>
</dbReference>
<dbReference type="Pfam" id="PF03167">
    <property type="entry name" value="UDG"/>
    <property type="match status" value="1"/>
</dbReference>
<dbReference type="SMART" id="SM00986">
    <property type="entry name" value="UDG"/>
    <property type="match status" value="1"/>
</dbReference>
<dbReference type="SMART" id="SM00987">
    <property type="entry name" value="UreE_C"/>
    <property type="match status" value="1"/>
</dbReference>
<dbReference type="SUPFAM" id="SSF52141">
    <property type="entry name" value="Uracil-DNA glycosylase-like"/>
    <property type="match status" value="1"/>
</dbReference>
<dbReference type="PROSITE" id="PS00130">
    <property type="entry name" value="U_DNA_GLYCOSYLASE"/>
    <property type="match status" value="1"/>
</dbReference>